<sequence>MLVVISPAKTLDYDNPAPTKQYTLPELVSHSAELIEVCKGLTPADIASLMSVSDKIAGLNAARFASWTPSFSLENAKQALFAFRGDVYTGLDADTLSPEELEYAQSHLRMLSGLYGVLKPLDLMQAYRLEMGTALGNGRGKNLYEFWGNLITDKLNEALSAQGDDILVNLASNEYFKAVKIKGIKGTLVNPVFKDAKNGQYKIISFYAKKARGLMARFILTTRTKTIEDLKRFDYDGYYYSPEQSTPCTPVFLREER</sequence>
<proteinExistence type="inferred from homology"/>
<name>Y917_SHEAM</name>
<organism>
    <name type="scientific">Shewanella amazonensis (strain ATCC BAA-1098 / SB2B)</name>
    <dbReference type="NCBI Taxonomy" id="326297"/>
    <lineage>
        <taxon>Bacteria</taxon>
        <taxon>Pseudomonadati</taxon>
        <taxon>Pseudomonadota</taxon>
        <taxon>Gammaproteobacteria</taxon>
        <taxon>Alteromonadales</taxon>
        <taxon>Shewanellaceae</taxon>
        <taxon>Shewanella</taxon>
    </lineage>
</organism>
<dbReference type="EMBL" id="CP000507">
    <property type="protein sequence ID" value="ABL99124.1"/>
    <property type="molecule type" value="Genomic_DNA"/>
</dbReference>
<dbReference type="RefSeq" id="WP_011759034.1">
    <property type="nucleotide sequence ID" value="NC_008700.1"/>
</dbReference>
<dbReference type="SMR" id="A1S418"/>
<dbReference type="STRING" id="326297.Sama_0917"/>
<dbReference type="KEGG" id="saz:Sama_0917"/>
<dbReference type="eggNOG" id="COG3022">
    <property type="taxonomic scope" value="Bacteria"/>
</dbReference>
<dbReference type="HOGENOM" id="CLU_061989_0_0_6"/>
<dbReference type="OrthoDB" id="9777133at2"/>
<dbReference type="Proteomes" id="UP000009175">
    <property type="component" value="Chromosome"/>
</dbReference>
<dbReference type="GO" id="GO:0005829">
    <property type="term" value="C:cytosol"/>
    <property type="evidence" value="ECO:0007669"/>
    <property type="project" value="TreeGrafter"/>
</dbReference>
<dbReference type="GO" id="GO:0033194">
    <property type="term" value="P:response to hydroperoxide"/>
    <property type="evidence" value="ECO:0007669"/>
    <property type="project" value="TreeGrafter"/>
</dbReference>
<dbReference type="HAMAP" id="MF_00652">
    <property type="entry name" value="UPF0246"/>
    <property type="match status" value="1"/>
</dbReference>
<dbReference type="InterPro" id="IPR005583">
    <property type="entry name" value="YaaA"/>
</dbReference>
<dbReference type="NCBIfam" id="NF002541">
    <property type="entry name" value="PRK02101.1-1"/>
    <property type="match status" value="1"/>
</dbReference>
<dbReference type="NCBIfam" id="NF002542">
    <property type="entry name" value="PRK02101.1-3"/>
    <property type="match status" value="1"/>
</dbReference>
<dbReference type="PANTHER" id="PTHR30283:SF4">
    <property type="entry name" value="PEROXIDE STRESS RESISTANCE PROTEIN YAAA"/>
    <property type="match status" value="1"/>
</dbReference>
<dbReference type="PANTHER" id="PTHR30283">
    <property type="entry name" value="PEROXIDE STRESS RESPONSE PROTEIN YAAA"/>
    <property type="match status" value="1"/>
</dbReference>
<dbReference type="Pfam" id="PF03883">
    <property type="entry name" value="H2O2_YaaD"/>
    <property type="match status" value="1"/>
</dbReference>
<accession>A1S418</accession>
<reference key="1">
    <citation type="submission" date="2006-12" db="EMBL/GenBank/DDBJ databases">
        <title>Complete sequence of Shewanella amazonensis SB2B.</title>
        <authorList>
            <consortium name="US DOE Joint Genome Institute"/>
            <person name="Copeland A."/>
            <person name="Lucas S."/>
            <person name="Lapidus A."/>
            <person name="Barry K."/>
            <person name="Detter J.C."/>
            <person name="Glavina del Rio T."/>
            <person name="Hammon N."/>
            <person name="Israni S."/>
            <person name="Dalin E."/>
            <person name="Tice H."/>
            <person name="Pitluck S."/>
            <person name="Munk A.C."/>
            <person name="Brettin T."/>
            <person name="Bruce D."/>
            <person name="Han C."/>
            <person name="Tapia R."/>
            <person name="Gilna P."/>
            <person name="Schmutz J."/>
            <person name="Larimer F."/>
            <person name="Land M."/>
            <person name="Hauser L."/>
            <person name="Kyrpides N."/>
            <person name="Mikhailova N."/>
            <person name="Fredrickson J."/>
            <person name="Richardson P."/>
        </authorList>
    </citation>
    <scope>NUCLEOTIDE SEQUENCE [LARGE SCALE GENOMIC DNA]</scope>
    <source>
        <strain>ATCC BAA-1098 / SB2B</strain>
    </source>
</reference>
<comment type="similarity">
    <text evidence="1">Belongs to the UPF0246 family.</text>
</comment>
<evidence type="ECO:0000255" key="1">
    <source>
        <dbReference type="HAMAP-Rule" id="MF_00652"/>
    </source>
</evidence>
<feature type="chain" id="PRO_1000061632" description="UPF0246 protein Sama_0917">
    <location>
        <begin position="1"/>
        <end position="257"/>
    </location>
</feature>
<keyword id="KW-1185">Reference proteome</keyword>
<protein>
    <recommendedName>
        <fullName evidence="1">UPF0246 protein Sama_0917</fullName>
    </recommendedName>
</protein>
<gene>
    <name type="ordered locus">Sama_0917</name>
</gene>